<feature type="signal peptide" evidence="2">
    <location>
        <begin position="1"/>
        <end position="17"/>
    </location>
</feature>
<feature type="chain" id="PRO_0000411938" description="Pheromone-processing carboxypeptidase KEX1">
    <location>
        <begin position="18"/>
        <end position="656"/>
    </location>
</feature>
<feature type="topological domain" description="Lumenal" evidence="2">
    <location>
        <begin position="18"/>
        <end position="536"/>
    </location>
</feature>
<feature type="transmembrane region" description="Helical" evidence="2">
    <location>
        <begin position="537"/>
        <end position="557"/>
    </location>
</feature>
<feature type="topological domain" description="Cytoplasmic" evidence="2">
    <location>
        <begin position="558"/>
        <end position="656"/>
    </location>
</feature>
<feature type="region of interest" description="Disordered" evidence="4">
    <location>
        <begin position="626"/>
        <end position="656"/>
    </location>
</feature>
<feature type="active site" evidence="3">
    <location>
        <position position="180"/>
    </location>
</feature>
<feature type="active site" evidence="3">
    <location>
        <position position="388"/>
    </location>
</feature>
<feature type="active site" evidence="3">
    <location>
        <position position="445"/>
    </location>
</feature>
<feature type="glycosylation site" description="N-linked (GlcNAc...) asparagine" evidence="2">
    <location>
        <position position="61"/>
    </location>
</feature>
<feature type="glycosylation site" description="N-linked (GlcNAc...) asparagine" evidence="2">
    <location>
        <position position="118"/>
    </location>
</feature>
<feature type="glycosylation site" description="N-linked (GlcNAc...) asparagine" evidence="2">
    <location>
        <position position="434"/>
    </location>
</feature>
<feature type="glycosylation site" description="N-linked (GlcNAc...) asparagine" evidence="2">
    <location>
        <position position="442"/>
    </location>
</feature>
<comment type="function">
    <text evidence="1">Protease with a carboxypeptidase B-like function involved in the C-terminal processing of the lysine and arginine residues from protein precursors. Promotes cell fusion and is involved in the programmed cell death (By similarity).</text>
</comment>
<comment type="catalytic activity">
    <reaction>
        <text>Preferential release of a C-terminal arginine or lysine residue.</text>
        <dbReference type="EC" id="3.4.16.6"/>
    </reaction>
</comment>
<comment type="subcellular location">
    <subcellularLocation>
        <location evidence="1">Golgi apparatus</location>
        <location evidence="1">trans-Golgi network membrane</location>
        <topology evidence="1">Single-pass type I membrane protein</topology>
    </subcellularLocation>
</comment>
<comment type="similarity">
    <text evidence="5">Belongs to the peptidase S10 family.</text>
</comment>
<accession>A5DAT0</accession>
<keyword id="KW-0053">Apoptosis</keyword>
<keyword id="KW-0121">Carboxypeptidase</keyword>
<keyword id="KW-0325">Glycoprotein</keyword>
<keyword id="KW-0333">Golgi apparatus</keyword>
<keyword id="KW-0378">Hydrolase</keyword>
<keyword id="KW-0472">Membrane</keyword>
<keyword id="KW-0645">Protease</keyword>
<keyword id="KW-1185">Reference proteome</keyword>
<keyword id="KW-0732">Signal</keyword>
<keyword id="KW-0812">Transmembrane</keyword>
<keyword id="KW-1133">Transmembrane helix</keyword>
<name>KEX1_PICGU</name>
<dbReference type="EC" id="3.4.16.6"/>
<dbReference type="EMBL" id="CH408155">
    <property type="protein sequence ID" value="EDK36287.2"/>
    <property type="molecule type" value="Genomic_DNA"/>
</dbReference>
<dbReference type="RefSeq" id="XP_001487008.1">
    <property type="nucleotide sequence ID" value="XM_001486958.1"/>
</dbReference>
<dbReference type="SMR" id="A5DAT0"/>
<dbReference type="FunCoup" id="A5DAT0">
    <property type="interactions" value="116"/>
</dbReference>
<dbReference type="STRING" id="294746.A5DAT0"/>
<dbReference type="ESTHER" id="picgu-kex1">
    <property type="family name" value="Carboxypeptidase_S10"/>
</dbReference>
<dbReference type="MEROPS" id="S10.007"/>
<dbReference type="GlyCosmos" id="A5DAT0">
    <property type="glycosylation" value="4 sites, No reported glycans"/>
</dbReference>
<dbReference type="GeneID" id="5129177"/>
<dbReference type="KEGG" id="pgu:PGUG_00385"/>
<dbReference type="VEuPathDB" id="FungiDB:PGUG_00385"/>
<dbReference type="eggNOG" id="KOG1282">
    <property type="taxonomic scope" value="Eukaryota"/>
</dbReference>
<dbReference type="HOGENOM" id="CLU_008523_11_2_1"/>
<dbReference type="InParanoid" id="A5DAT0"/>
<dbReference type="OMA" id="PLMFAGQ"/>
<dbReference type="OrthoDB" id="443318at2759"/>
<dbReference type="Proteomes" id="UP000001997">
    <property type="component" value="Unassembled WGS sequence"/>
</dbReference>
<dbReference type="GO" id="GO:0016020">
    <property type="term" value="C:membrane"/>
    <property type="evidence" value="ECO:0007669"/>
    <property type="project" value="UniProtKB-KW"/>
</dbReference>
<dbReference type="GO" id="GO:0005802">
    <property type="term" value="C:trans-Golgi network"/>
    <property type="evidence" value="ECO:0007669"/>
    <property type="project" value="TreeGrafter"/>
</dbReference>
<dbReference type="GO" id="GO:0004185">
    <property type="term" value="F:serine-type carboxypeptidase activity"/>
    <property type="evidence" value="ECO:0007669"/>
    <property type="project" value="UniProtKB-EC"/>
</dbReference>
<dbReference type="GO" id="GO:0006915">
    <property type="term" value="P:apoptotic process"/>
    <property type="evidence" value="ECO:0007669"/>
    <property type="project" value="UniProtKB-KW"/>
</dbReference>
<dbReference type="GO" id="GO:0006508">
    <property type="term" value="P:proteolysis"/>
    <property type="evidence" value="ECO:0007669"/>
    <property type="project" value="UniProtKB-KW"/>
</dbReference>
<dbReference type="Gene3D" id="3.40.50.1820">
    <property type="entry name" value="alpha/beta hydrolase"/>
    <property type="match status" value="1"/>
</dbReference>
<dbReference type="InterPro" id="IPR029058">
    <property type="entry name" value="AB_hydrolase_fold"/>
</dbReference>
<dbReference type="InterPro" id="IPR001563">
    <property type="entry name" value="Peptidase_S10"/>
</dbReference>
<dbReference type="InterPro" id="IPR033124">
    <property type="entry name" value="Ser_caboxypep_his_AS"/>
</dbReference>
<dbReference type="PANTHER" id="PTHR11802:SF190">
    <property type="entry name" value="PHEROMONE-PROCESSING CARBOXYPEPTIDASE KEX1"/>
    <property type="match status" value="1"/>
</dbReference>
<dbReference type="PANTHER" id="PTHR11802">
    <property type="entry name" value="SERINE PROTEASE FAMILY S10 SERINE CARBOXYPEPTIDASE"/>
    <property type="match status" value="1"/>
</dbReference>
<dbReference type="Pfam" id="PF00450">
    <property type="entry name" value="Peptidase_S10"/>
    <property type="match status" value="1"/>
</dbReference>
<dbReference type="PRINTS" id="PR00724">
    <property type="entry name" value="CRBOXYPTASEC"/>
</dbReference>
<dbReference type="SUPFAM" id="SSF53474">
    <property type="entry name" value="alpha/beta-Hydrolases"/>
    <property type="match status" value="1"/>
</dbReference>
<dbReference type="PROSITE" id="PS00560">
    <property type="entry name" value="CARBOXYPEPT_SER_HIS"/>
    <property type="match status" value="1"/>
</dbReference>
<sequence length="656" mass="73287">MFFHAILVLIQVALALGASPRAGSSERSKYFVTSLPGMYSNLPKEEIPIMFSGQLELFPENNTHYYFWKFVNPNPIAEAERRTIFWLNGGPGCSSMDGALMEAGPFRVNDDKEIVYNNGSWHKAGDIVFVDQPAGTGFSYSDEYEHELPDVSVHFLKFLEKYFEVFPEDRQNQIFFAGESYAGQYIPYIADGILKRNKNLKAGESPYDLRGLLIGNGWIAPNEQSLSYVQYALQAGFVSPSMPGWSRLLASQERCQNVVNSVNTQDDSVSDYKVVSDVCDQVLNTLLEVARDRDAPADQQCVNMYDYTLRDEFPSCGMNWPPDLVNVKPFLNIPGVQSQLNLVHKKPWLECSGRVGRNFVAQRSKPAVHLLPSLLEDVPILLFNGNRDIICNYIGTEAFIKELEWNGQKGWDDDNVFDWNFDGNLAGYVRNSRNLTFVNVFNSSHMVPFDLPDTSRSLMDLVTGNFDIKDDKILTYKLGTRGQAKQSDKKPASTSSIPSEISATALASGSSSASAQASATANEADGDNNTSHKIERAIQLLVIIVLLWGIYALYSSYKSRPSSIIKSGPTGKKKNVQWADQLRRFQEDDQVRVQPHGIFAKALNKFKGNSDGAYAPVQGRYEDIEMSSASPIDDFVVVSDDEEEEPSRNEPSSNQK</sequence>
<organism>
    <name type="scientific">Meyerozyma guilliermondii (strain ATCC 6260 / CBS 566 / DSM 6381 / JCM 1539 / NBRC 10279 / NRRL Y-324)</name>
    <name type="common">Yeast</name>
    <name type="synonym">Candida guilliermondii</name>
    <dbReference type="NCBI Taxonomy" id="294746"/>
    <lineage>
        <taxon>Eukaryota</taxon>
        <taxon>Fungi</taxon>
        <taxon>Dikarya</taxon>
        <taxon>Ascomycota</taxon>
        <taxon>Saccharomycotina</taxon>
        <taxon>Pichiomycetes</taxon>
        <taxon>Debaryomycetaceae</taxon>
        <taxon>Meyerozyma</taxon>
    </lineage>
</organism>
<gene>
    <name type="primary">KEX1</name>
    <name type="ORF">PGUG_00385</name>
</gene>
<protein>
    <recommendedName>
        <fullName>Pheromone-processing carboxypeptidase KEX1</fullName>
        <ecNumber>3.4.16.6</ecNumber>
    </recommendedName>
    <alternativeName>
        <fullName>Carboxypeptidase D</fullName>
    </alternativeName>
</protein>
<proteinExistence type="inferred from homology"/>
<reference key="1">
    <citation type="journal article" date="2009" name="Nature">
        <title>Evolution of pathogenicity and sexual reproduction in eight Candida genomes.</title>
        <authorList>
            <person name="Butler G."/>
            <person name="Rasmussen M.D."/>
            <person name="Lin M.F."/>
            <person name="Santos M.A.S."/>
            <person name="Sakthikumar S."/>
            <person name="Munro C.A."/>
            <person name="Rheinbay E."/>
            <person name="Grabherr M."/>
            <person name="Forche A."/>
            <person name="Reedy J.L."/>
            <person name="Agrafioti I."/>
            <person name="Arnaud M.B."/>
            <person name="Bates S."/>
            <person name="Brown A.J.P."/>
            <person name="Brunke S."/>
            <person name="Costanzo M.C."/>
            <person name="Fitzpatrick D.A."/>
            <person name="de Groot P.W.J."/>
            <person name="Harris D."/>
            <person name="Hoyer L.L."/>
            <person name="Hube B."/>
            <person name="Klis F.M."/>
            <person name="Kodira C."/>
            <person name="Lennard N."/>
            <person name="Logue M.E."/>
            <person name="Martin R."/>
            <person name="Neiman A.M."/>
            <person name="Nikolaou E."/>
            <person name="Quail M.A."/>
            <person name="Quinn J."/>
            <person name="Santos M.C."/>
            <person name="Schmitzberger F.F."/>
            <person name="Sherlock G."/>
            <person name="Shah P."/>
            <person name="Silverstein K.A.T."/>
            <person name="Skrzypek M.S."/>
            <person name="Soll D."/>
            <person name="Staggs R."/>
            <person name="Stansfield I."/>
            <person name="Stumpf M.P.H."/>
            <person name="Sudbery P.E."/>
            <person name="Srikantha T."/>
            <person name="Zeng Q."/>
            <person name="Berman J."/>
            <person name="Berriman M."/>
            <person name="Heitman J."/>
            <person name="Gow N.A.R."/>
            <person name="Lorenz M.C."/>
            <person name="Birren B.W."/>
            <person name="Kellis M."/>
            <person name="Cuomo C.A."/>
        </authorList>
    </citation>
    <scope>NUCLEOTIDE SEQUENCE [LARGE SCALE GENOMIC DNA]</scope>
    <source>
        <strain>ATCC 6260 / CBS 566 / DSM 6381 / JCM 1539 / NBRC 10279 / NRRL Y-324</strain>
    </source>
</reference>
<evidence type="ECO:0000250" key="1"/>
<evidence type="ECO:0000255" key="2"/>
<evidence type="ECO:0000255" key="3">
    <source>
        <dbReference type="PROSITE-ProRule" id="PRU10075"/>
    </source>
</evidence>
<evidence type="ECO:0000256" key="4">
    <source>
        <dbReference type="SAM" id="MobiDB-lite"/>
    </source>
</evidence>
<evidence type="ECO:0000305" key="5"/>